<reference key="1">
    <citation type="journal article" date="2008" name="PLoS ONE">
        <title>Genome sequence of the saprophyte Leptospira biflexa provides insights into the evolution of Leptospira and the pathogenesis of leptospirosis.</title>
        <authorList>
            <person name="Picardeau M."/>
            <person name="Bulach D.M."/>
            <person name="Bouchier C."/>
            <person name="Zuerner R.L."/>
            <person name="Zidane N."/>
            <person name="Wilson P.J."/>
            <person name="Creno S."/>
            <person name="Kuczek E.S."/>
            <person name="Bommezzadri S."/>
            <person name="Davis J.C."/>
            <person name="McGrath A."/>
            <person name="Johnson M.J."/>
            <person name="Boursaux-Eude C."/>
            <person name="Seemann T."/>
            <person name="Rouy Z."/>
            <person name="Coppel R.L."/>
            <person name="Rood J.I."/>
            <person name="Lajus A."/>
            <person name="Davies J.K."/>
            <person name="Medigue C."/>
            <person name="Adler B."/>
        </authorList>
    </citation>
    <scope>NUCLEOTIDE SEQUENCE [LARGE SCALE GENOMIC DNA]</scope>
    <source>
        <strain>Patoc 1 / Ames</strain>
    </source>
</reference>
<dbReference type="EC" id="1.11.1.21" evidence="1"/>
<dbReference type="EMBL" id="CP000777">
    <property type="protein sequence ID" value="ABZ94911.1"/>
    <property type="molecule type" value="Genomic_DNA"/>
</dbReference>
<dbReference type="RefSeq" id="WP_012389443.1">
    <property type="nucleotide sequence ID" value="NC_010842.1"/>
</dbReference>
<dbReference type="SMR" id="B0SD19"/>
<dbReference type="KEGG" id="lbf:LBF_2421"/>
<dbReference type="HOGENOM" id="CLU_025424_2_0_12"/>
<dbReference type="GO" id="GO:0005829">
    <property type="term" value="C:cytosol"/>
    <property type="evidence" value="ECO:0007669"/>
    <property type="project" value="TreeGrafter"/>
</dbReference>
<dbReference type="GO" id="GO:0004096">
    <property type="term" value="F:catalase activity"/>
    <property type="evidence" value="ECO:0007669"/>
    <property type="project" value="UniProtKB-UniRule"/>
</dbReference>
<dbReference type="GO" id="GO:0020037">
    <property type="term" value="F:heme binding"/>
    <property type="evidence" value="ECO:0007669"/>
    <property type="project" value="InterPro"/>
</dbReference>
<dbReference type="GO" id="GO:0046872">
    <property type="term" value="F:metal ion binding"/>
    <property type="evidence" value="ECO:0007669"/>
    <property type="project" value="UniProtKB-KW"/>
</dbReference>
<dbReference type="GO" id="GO:0070301">
    <property type="term" value="P:cellular response to hydrogen peroxide"/>
    <property type="evidence" value="ECO:0007669"/>
    <property type="project" value="TreeGrafter"/>
</dbReference>
<dbReference type="GO" id="GO:0042744">
    <property type="term" value="P:hydrogen peroxide catabolic process"/>
    <property type="evidence" value="ECO:0007669"/>
    <property type="project" value="UniProtKB-KW"/>
</dbReference>
<dbReference type="CDD" id="cd00649">
    <property type="entry name" value="catalase_peroxidase_1"/>
    <property type="match status" value="1"/>
</dbReference>
<dbReference type="CDD" id="cd08200">
    <property type="entry name" value="catalase_peroxidase_2"/>
    <property type="match status" value="1"/>
</dbReference>
<dbReference type="FunFam" id="1.10.420.10:FF:000002">
    <property type="entry name" value="Catalase-peroxidase"/>
    <property type="match status" value="1"/>
</dbReference>
<dbReference type="FunFam" id="1.10.420.10:FF:000004">
    <property type="entry name" value="Catalase-peroxidase"/>
    <property type="match status" value="1"/>
</dbReference>
<dbReference type="FunFam" id="1.10.520.10:FF:000002">
    <property type="entry name" value="Catalase-peroxidase"/>
    <property type="match status" value="1"/>
</dbReference>
<dbReference type="Gene3D" id="1.10.520.10">
    <property type="match status" value="2"/>
</dbReference>
<dbReference type="Gene3D" id="1.10.420.10">
    <property type="entry name" value="Peroxidase, domain 2"/>
    <property type="match status" value="2"/>
</dbReference>
<dbReference type="HAMAP" id="MF_01961">
    <property type="entry name" value="Catal_peroxid"/>
    <property type="match status" value="1"/>
</dbReference>
<dbReference type="InterPro" id="IPR000763">
    <property type="entry name" value="Catalase_peroxidase"/>
</dbReference>
<dbReference type="InterPro" id="IPR002016">
    <property type="entry name" value="Haem_peroxidase"/>
</dbReference>
<dbReference type="InterPro" id="IPR010255">
    <property type="entry name" value="Haem_peroxidase_sf"/>
</dbReference>
<dbReference type="InterPro" id="IPR019794">
    <property type="entry name" value="Peroxidases_AS"/>
</dbReference>
<dbReference type="InterPro" id="IPR019793">
    <property type="entry name" value="Peroxidases_heam-ligand_BS"/>
</dbReference>
<dbReference type="NCBIfam" id="TIGR00198">
    <property type="entry name" value="cat_per_HPI"/>
    <property type="match status" value="1"/>
</dbReference>
<dbReference type="NCBIfam" id="NF011635">
    <property type="entry name" value="PRK15061.1"/>
    <property type="match status" value="1"/>
</dbReference>
<dbReference type="PANTHER" id="PTHR30555:SF0">
    <property type="entry name" value="CATALASE-PEROXIDASE"/>
    <property type="match status" value="1"/>
</dbReference>
<dbReference type="PANTHER" id="PTHR30555">
    <property type="entry name" value="HYDROPEROXIDASE I, BIFUNCTIONAL CATALASE-PEROXIDASE"/>
    <property type="match status" value="1"/>
</dbReference>
<dbReference type="Pfam" id="PF00141">
    <property type="entry name" value="peroxidase"/>
    <property type="match status" value="2"/>
</dbReference>
<dbReference type="PRINTS" id="PR00460">
    <property type="entry name" value="BPEROXIDASE"/>
</dbReference>
<dbReference type="PRINTS" id="PR00458">
    <property type="entry name" value="PEROXIDASE"/>
</dbReference>
<dbReference type="SUPFAM" id="SSF48113">
    <property type="entry name" value="Heme-dependent peroxidases"/>
    <property type="match status" value="2"/>
</dbReference>
<dbReference type="PROSITE" id="PS00435">
    <property type="entry name" value="PEROXIDASE_1"/>
    <property type="match status" value="1"/>
</dbReference>
<dbReference type="PROSITE" id="PS00436">
    <property type="entry name" value="PEROXIDASE_2"/>
    <property type="match status" value="1"/>
</dbReference>
<dbReference type="PROSITE" id="PS50873">
    <property type="entry name" value="PEROXIDASE_4"/>
    <property type="match status" value="1"/>
</dbReference>
<accession>B0SD19</accession>
<keyword id="KW-0349">Heme</keyword>
<keyword id="KW-0376">Hydrogen peroxide</keyword>
<keyword id="KW-0408">Iron</keyword>
<keyword id="KW-0479">Metal-binding</keyword>
<keyword id="KW-0560">Oxidoreductase</keyword>
<keyword id="KW-0575">Peroxidase</keyword>
<keyword id="KW-0732">Signal</keyword>
<comment type="function">
    <text evidence="1">Bifunctional enzyme with both catalase and broad-spectrum peroxidase activity.</text>
</comment>
<comment type="catalytic activity">
    <reaction evidence="1">
        <text>H2O2 + AH2 = A + 2 H2O</text>
        <dbReference type="Rhea" id="RHEA:30275"/>
        <dbReference type="ChEBI" id="CHEBI:13193"/>
        <dbReference type="ChEBI" id="CHEBI:15377"/>
        <dbReference type="ChEBI" id="CHEBI:16240"/>
        <dbReference type="ChEBI" id="CHEBI:17499"/>
        <dbReference type="EC" id="1.11.1.21"/>
    </reaction>
</comment>
<comment type="catalytic activity">
    <reaction evidence="1">
        <text>2 H2O2 = O2 + 2 H2O</text>
        <dbReference type="Rhea" id="RHEA:20309"/>
        <dbReference type="ChEBI" id="CHEBI:15377"/>
        <dbReference type="ChEBI" id="CHEBI:15379"/>
        <dbReference type="ChEBI" id="CHEBI:16240"/>
        <dbReference type="EC" id="1.11.1.21"/>
    </reaction>
</comment>
<comment type="cofactor">
    <cofactor evidence="1">
        <name>heme b</name>
        <dbReference type="ChEBI" id="CHEBI:60344"/>
    </cofactor>
    <text evidence="1">Binds 1 heme b (iron(II)-protoporphyrin IX) group per dimer.</text>
</comment>
<comment type="subunit">
    <text evidence="1">Homodimer or homotetramer.</text>
</comment>
<comment type="PTM">
    <text evidence="1">Formation of the three residue Trp-Tyr-Met cross-link is important for the catalase, but not the peroxidase activity of the enzyme.</text>
</comment>
<comment type="similarity">
    <text evidence="1">Belongs to the peroxidase family. Peroxidase/catalase subfamily.</text>
</comment>
<evidence type="ECO:0000255" key="1">
    <source>
        <dbReference type="HAMAP-Rule" id="MF_01961"/>
    </source>
</evidence>
<sequence>MRNFRRFTIALLVLFLGPIGAADTKETPGMDRQNTSNQFWWPERLDLAPLRQHGSESNPLGRQFHYAKEFKELDIQTLKEEIKTVMKTSQDWWPADYGHYGPFFIRMAWHSAGTYRISDGRGGAGGGQQRFEPLNSWPDNANLDKARRLLWPIKKKYGKKISWADLMVLTGNVALESMGFKTYGFAGGRTDDWEADLVYWGPEKKFLEDQRYKGNRELKNPLAAVQMGLIYVNPEGPNGNPDPLAAAKDIRETFGRMAMNDEETVALIAGGHTFGKAHGKSDPSKHVGKEPAAAGLEEQGFGWKNNYKKGNAEDTITSGLEGAWTANPTKWTTQYLNNLFGFEWVQTKSPAGAIQWVPKDGAGANMVPDAHDKSLRHAPIMFTTDLALKFDPSYKVIAKRFQENPKEFELAFAKAWFKLTHRDMGPLTRYIGKDLPKEPLIWQDPVPAVNHKLVGPKEIESLKGKILKSGLSVPQLVRTAWASAASFRSTDMRGGANGARIRLSPQKNWPVNDPDELSKVLKKLEQIQEEFNKSGNKISLADLIVLAGNAAIEEAAKKAGVKVTVPFTPGRTDATIEQTDEYSFSVLEPKADAFRNYYGPGNLMSPTEMLVDRANMLSLSIPEMTVLLGGMRSLDANAGKSKHGILTTKPGVLSNDFFVNLLDMSTKWQKSEQTEGLYEGLDRKTGSKRWTATSVDLIFGSHSELRAVAEVYASDDAKEKFVKDFVSAWNKVMMLDRFDVK</sequence>
<name>KATG_LEPBA</name>
<gene>
    <name evidence="1" type="primary">katG</name>
    <name type="ordered locus">LBF_2421</name>
</gene>
<protein>
    <recommendedName>
        <fullName evidence="1">Catalase-peroxidase</fullName>
        <shortName evidence="1">CP</shortName>
        <ecNumber evidence="1">1.11.1.21</ecNumber>
    </recommendedName>
    <alternativeName>
        <fullName evidence="1">Peroxidase/catalase</fullName>
    </alternativeName>
</protein>
<feature type="signal peptide" evidence="1">
    <location>
        <begin position="1"/>
        <end position="21"/>
    </location>
</feature>
<feature type="chain" id="PRO_0000354824" description="Catalase-peroxidase">
    <location>
        <begin position="22"/>
        <end position="741"/>
    </location>
</feature>
<feature type="active site" description="Proton acceptor" evidence="1">
    <location>
        <position position="110"/>
    </location>
</feature>
<feature type="binding site" description="axial binding residue" evidence="1">
    <location>
        <position position="272"/>
    </location>
    <ligand>
        <name>heme b</name>
        <dbReference type="ChEBI" id="CHEBI:60344"/>
    </ligand>
    <ligandPart>
        <name>Fe</name>
        <dbReference type="ChEBI" id="CHEBI:18248"/>
    </ligandPart>
</feature>
<feature type="site" description="Transition state stabilizer" evidence="1">
    <location>
        <position position="106"/>
    </location>
</feature>
<feature type="cross-link" description="Tryptophyl-tyrosyl-methioninium (Trp-Tyr) (with M-257)" evidence="1">
    <location>
        <begin position="109"/>
        <end position="231"/>
    </location>
</feature>
<feature type="cross-link" description="Tryptophyl-tyrosyl-methioninium (Tyr-Met) (with W-109)" evidence="1">
    <location>
        <begin position="231"/>
        <end position="257"/>
    </location>
</feature>
<organism>
    <name type="scientific">Leptospira biflexa serovar Patoc (strain Patoc 1 / Ames)</name>
    <dbReference type="NCBI Taxonomy" id="355278"/>
    <lineage>
        <taxon>Bacteria</taxon>
        <taxon>Pseudomonadati</taxon>
        <taxon>Spirochaetota</taxon>
        <taxon>Spirochaetia</taxon>
        <taxon>Leptospirales</taxon>
        <taxon>Leptospiraceae</taxon>
        <taxon>Leptospira</taxon>
    </lineage>
</organism>
<proteinExistence type="inferred from homology"/>